<name>CSRA_NATTJ</name>
<protein>
    <recommendedName>
        <fullName evidence="1">Translational regulator CsrA</fullName>
    </recommendedName>
</protein>
<comment type="function">
    <text evidence="1">A translational regulator that binds mRNA to regulate translation initiation and/or mRNA stability. Usually binds in the 5'-UTR at or near the Shine-Dalgarno sequence preventing ribosome-binding, thus repressing translation. Its main target seems to be the major flagellin gene, while its function is anatagonized by FliW.</text>
</comment>
<comment type="subunit">
    <text evidence="1">Homodimer; the beta-strands of each monomer intercalate to form a hydrophobic core, while the alpha-helices form wings that extend away from the core.</text>
</comment>
<comment type="subcellular location">
    <subcellularLocation>
        <location evidence="1">Cytoplasm</location>
    </subcellularLocation>
</comment>
<comment type="similarity">
    <text evidence="1">Belongs to the CsrA/RsmA family.</text>
</comment>
<keyword id="KW-1005">Bacterial flagellum biogenesis</keyword>
<keyword id="KW-0963">Cytoplasm</keyword>
<keyword id="KW-1185">Reference proteome</keyword>
<keyword id="KW-0678">Repressor</keyword>
<keyword id="KW-0694">RNA-binding</keyword>
<keyword id="KW-0810">Translation regulation</keyword>
<gene>
    <name evidence="1" type="primary">csrA</name>
    <name type="ordered locus">Nther_2232</name>
</gene>
<dbReference type="EMBL" id="CP001034">
    <property type="protein sequence ID" value="ACB85798.1"/>
    <property type="molecule type" value="Genomic_DNA"/>
</dbReference>
<dbReference type="RefSeq" id="WP_012448650.1">
    <property type="nucleotide sequence ID" value="NC_010718.1"/>
</dbReference>
<dbReference type="SMR" id="B2A826"/>
<dbReference type="FunCoup" id="B2A826">
    <property type="interactions" value="86"/>
</dbReference>
<dbReference type="STRING" id="457570.Nther_2232"/>
<dbReference type="KEGG" id="nth:Nther_2232"/>
<dbReference type="eggNOG" id="COG1551">
    <property type="taxonomic scope" value="Bacteria"/>
</dbReference>
<dbReference type="HOGENOM" id="CLU_164837_2_2_9"/>
<dbReference type="InParanoid" id="B2A826"/>
<dbReference type="OrthoDB" id="9809061at2"/>
<dbReference type="Proteomes" id="UP000001683">
    <property type="component" value="Chromosome"/>
</dbReference>
<dbReference type="GO" id="GO:0005829">
    <property type="term" value="C:cytosol"/>
    <property type="evidence" value="ECO:0007669"/>
    <property type="project" value="TreeGrafter"/>
</dbReference>
<dbReference type="GO" id="GO:0048027">
    <property type="term" value="F:mRNA 5'-UTR binding"/>
    <property type="evidence" value="ECO:0007669"/>
    <property type="project" value="UniProtKB-UniRule"/>
</dbReference>
<dbReference type="GO" id="GO:0044781">
    <property type="term" value="P:bacterial-type flagellum organization"/>
    <property type="evidence" value="ECO:0007669"/>
    <property type="project" value="UniProtKB-KW"/>
</dbReference>
<dbReference type="GO" id="GO:0006402">
    <property type="term" value="P:mRNA catabolic process"/>
    <property type="evidence" value="ECO:0007669"/>
    <property type="project" value="InterPro"/>
</dbReference>
<dbReference type="GO" id="GO:0045947">
    <property type="term" value="P:negative regulation of translational initiation"/>
    <property type="evidence" value="ECO:0007669"/>
    <property type="project" value="UniProtKB-UniRule"/>
</dbReference>
<dbReference type="GO" id="GO:1902208">
    <property type="term" value="P:regulation of bacterial-type flagellum assembly"/>
    <property type="evidence" value="ECO:0007669"/>
    <property type="project" value="UniProtKB-UniRule"/>
</dbReference>
<dbReference type="GO" id="GO:0006109">
    <property type="term" value="P:regulation of carbohydrate metabolic process"/>
    <property type="evidence" value="ECO:0007669"/>
    <property type="project" value="InterPro"/>
</dbReference>
<dbReference type="FunFam" id="2.60.40.4380:FF:000002">
    <property type="entry name" value="Translational regulator CsrA"/>
    <property type="match status" value="1"/>
</dbReference>
<dbReference type="Gene3D" id="2.60.40.4380">
    <property type="entry name" value="Translational regulator CsrA"/>
    <property type="match status" value="1"/>
</dbReference>
<dbReference type="HAMAP" id="MF_00167">
    <property type="entry name" value="CsrA"/>
    <property type="match status" value="1"/>
</dbReference>
<dbReference type="InterPro" id="IPR003751">
    <property type="entry name" value="CsrA"/>
</dbReference>
<dbReference type="InterPro" id="IPR036107">
    <property type="entry name" value="CsrA_sf"/>
</dbReference>
<dbReference type="NCBIfam" id="TIGR00202">
    <property type="entry name" value="csrA"/>
    <property type="match status" value="1"/>
</dbReference>
<dbReference type="NCBIfam" id="NF002469">
    <property type="entry name" value="PRK01712.1"/>
    <property type="match status" value="1"/>
</dbReference>
<dbReference type="PANTHER" id="PTHR34984">
    <property type="entry name" value="CARBON STORAGE REGULATOR"/>
    <property type="match status" value="1"/>
</dbReference>
<dbReference type="PANTHER" id="PTHR34984:SF1">
    <property type="entry name" value="CARBON STORAGE REGULATOR"/>
    <property type="match status" value="1"/>
</dbReference>
<dbReference type="Pfam" id="PF02599">
    <property type="entry name" value="CsrA"/>
    <property type="match status" value="1"/>
</dbReference>
<dbReference type="SUPFAM" id="SSF117130">
    <property type="entry name" value="CsrA-like"/>
    <property type="match status" value="1"/>
</dbReference>
<feature type="chain" id="PRO_1000097499" description="Translational regulator CsrA">
    <location>
        <begin position="1"/>
        <end position="78"/>
    </location>
</feature>
<organism>
    <name type="scientific">Natranaerobius thermophilus (strain ATCC BAA-1301 / DSM 18059 / JW/NM-WN-LF)</name>
    <dbReference type="NCBI Taxonomy" id="457570"/>
    <lineage>
        <taxon>Bacteria</taxon>
        <taxon>Bacillati</taxon>
        <taxon>Bacillota</taxon>
        <taxon>Clostridia</taxon>
        <taxon>Natranaerobiales</taxon>
        <taxon>Natranaerobiaceae</taxon>
        <taxon>Natranaerobius</taxon>
    </lineage>
</organism>
<proteinExistence type="inferred from homology"/>
<sequence>MLVLTRKQNESIMIGDDIEITVVGTEGDKVRLGIKAPKDVEIHRAEVYQKIQEENVKASQVSENVLDKLSDALQKKNK</sequence>
<accession>B2A826</accession>
<evidence type="ECO:0000255" key="1">
    <source>
        <dbReference type="HAMAP-Rule" id="MF_00167"/>
    </source>
</evidence>
<reference key="1">
    <citation type="submission" date="2008-04" db="EMBL/GenBank/DDBJ databases">
        <title>Complete sequence of chromosome of Natranaerobius thermophilus JW/NM-WN-LF.</title>
        <authorList>
            <consortium name="US DOE Joint Genome Institute"/>
            <person name="Copeland A."/>
            <person name="Lucas S."/>
            <person name="Lapidus A."/>
            <person name="Glavina del Rio T."/>
            <person name="Dalin E."/>
            <person name="Tice H."/>
            <person name="Bruce D."/>
            <person name="Goodwin L."/>
            <person name="Pitluck S."/>
            <person name="Chertkov O."/>
            <person name="Brettin T."/>
            <person name="Detter J.C."/>
            <person name="Han C."/>
            <person name="Kuske C.R."/>
            <person name="Schmutz J."/>
            <person name="Larimer F."/>
            <person name="Land M."/>
            <person name="Hauser L."/>
            <person name="Kyrpides N."/>
            <person name="Lykidis A."/>
            <person name="Mesbah N.M."/>
            <person name="Wiegel J."/>
        </authorList>
    </citation>
    <scope>NUCLEOTIDE SEQUENCE [LARGE SCALE GENOMIC DNA]</scope>
    <source>
        <strain>ATCC BAA-1301 / DSM 18059 / JW/NM-WN-LF</strain>
    </source>
</reference>